<proteinExistence type="inferred from homology"/>
<protein>
    <recommendedName>
        <fullName evidence="1">Cytidine deaminase</fullName>
        <ecNumber evidence="1">3.5.4.5</ecNumber>
    </recommendedName>
    <alternativeName>
        <fullName evidence="1">Cytidine aminohydrolase</fullName>
        <shortName evidence="1">CDA</shortName>
    </alternativeName>
</protein>
<evidence type="ECO:0000255" key="1">
    <source>
        <dbReference type="HAMAP-Rule" id="MF_01558"/>
    </source>
</evidence>
<evidence type="ECO:0000255" key="2">
    <source>
        <dbReference type="PROSITE-ProRule" id="PRU01083"/>
    </source>
</evidence>
<dbReference type="EC" id="3.5.4.5" evidence="1"/>
<dbReference type="EMBL" id="CP001063">
    <property type="protein sequence ID" value="ACD08483.1"/>
    <property type="molecule type" value="Genomic_DNA"/>
</dbReference>
<dbReference type="RefSeq" id="WP_000553555.1">
    <property type="nucleotide sequence ID" value="NC_010658.1"/>
</dbReference>
<dbReference type="SMR" id="B2TVV2"/>
<dbReference type="STRING" id="344609.SbBS512_E0828"/>
<dbReference type="GeneID" id="93775039"/>
<dbReference type="KEGG" id="sbc:SbBS512_E0828"/>
<dbReference type="HOGENOM" id="CLU_052424_0_0_6"/>
<dbReference type="Proteomes" id="UP000001030">
    <property type="component" value="Chromosome"/>
</dbReference>
<dbReference type="GO" id="GO:0005829">
    <property type="term" value="C:cytosol"/>
    <property type="evidence" value="ECO:0007669"/>
    <property type="project" value="TreeGrafter"/>
</dbReference>
<dbReference type="GO" id="GO:0004126">
    <property type="term" value="F:cytidine deaminase activity"/>
    <property type="evidence" value="ECO:0007669"/>
    <property type="project" value="UniProtKB-UniRule"/>
</dbReference>
<dbReference type="GO" id="GO:0042802">
    <property type="term" value="F:identical protein binding"/>
    <property type="evidence" value="ECO:0007669"/>
    <property type="project" value="UniProtKB-ARBA"/>
</dbReference>
<dbReference type="GO" id="GO:0008270">
    <property type="term" value="F:zinc ion binding"/>
    <property type="evidence" value="ECO:0007669"/>
    <property type="project" value="UniProtKB-UniRule"/>
</dbReference>
<dbReference type="GO" id="GO:0009972">
    <property type="term" value="P:cytidine deamination"/>
    <property type="evidence" value="ECO:0007669"/>
    <property type="project" value="InterPro"/>
</dbReference>
<dbReference type="CDD" id="cd01283">
    <property type="entry name" value="cytidine_deaminase"/>
    <property type="match status" value="2"/>
</dbReference>
<dbReference type="FunFam" id="3.40.140.10:FF:000006">
    <property type="entry name" value="Cytidine deaminase"/>
    <property type="match status" value="1"/>
</dbReference>
<dbReference type="FunFam" id="3.40.140.10:FF:000007">
    <property type="entry name" value="Cytidine deaminase"/>
    <property type="match status" value="1"/>
</dbReference>
<dbReference type="Gene3D" id="3.40.140.10">
    <property type="entry name" value="Cytidine Deaminase, domain 2"/>
    <property type="match status" value="2"/>
</dbReference>
<dbReference type="HAMAP" id="MF_01558">
    <property type="entry name" value="Cyt_deam"/>
    <property type="match status" value="1"/>
</dbReference>
<dbReference type="InterPro" id="IPR016192">
    <property type="entry name" value="APOBEC/CMP_deaminase_Zn-bd"/>
</dbReference>
<dbReference type="InterPro" id="IPR002125">
    <property type="entry name" value="CMP_dCMP_dom"/>
</dbReference>
<dbReference type="InterPro" id="IPR013171">
    <property type="entry name" value="Cyd/dCyd_deaminase_Zn-bd"/>
</dbReference>
<dbReference type="InterPro" id="IPR050202">
    <property type="entry name" value="Cyt/Deoxycyt_deaminase"/>
</dbReference>
<dbReference type="InterPro" id="IPR006263">
    <property type="entry name" value="Cyt_deam_dimer"/>
</dbReference>
<dbReference type="InterPro" id="IPR016193">
    <property type="entry name" value="Cytidine_deaminase-like"/>
</dbReference>
<dbReference type="InterPro" id="IPR020797">
    <property type="entry name" value="Cytidine_deaminase_bacteria"/>
</dbReference>
<dbReference type="NCBIfam" id="TIGR01355">
    <property type="entry name" value="cyt_deam_dimer"/>
    <property type="match status" value="1"/>
</dbReference>
<dbReference type="NCBIfam" id="NF006537">
    <property type="entry name" value="PRK09027.1"/>
    <property type="match status" value="1"/>
</dbReference>
<dbReference type="PANTHER" id="PTHR11644">
    <property type="entry name" value="CYTIDINE DEAMINASE"/>
    <property type="match status" value="1"/>
</dbReference>
<dbReference type="PANTHER" id="PTHR11644:SF2">
    <property type="entry name" value="CYTIDINE DEAMINASE"/>
    <property type="match status" value="1"/>
</dbReference>
<dbReference type="Pfam" id="PF00383">
    <property type="entry name" value="dCMP_cyt_deam_1"/>
    <property type="match status" value="1"/>
</dbReference>
<dbReference type="Pfam" id="PF08211">
    <property type="entry name" value="dCMP_cyt_deam_2"/>
    <property type="match status" value="1"/>
</dbReference>
<dbReference type="PIRSF" id="PIRSF006334">
    <property type="entry name" value="Cdd_plus_pseudo"/>
    <property type="match status" value="1"/>
</dbReference>
<dbReference type="SUPFAM" id="SSF53927">
    <property type="entry name" value="Cytidine deaminase-like"/>
    <property type="match status" value="2"/>
</dbReference>
<dbReference type="PROSITE" id="PS00903">
    <property type="entry name" value="CYT_DCMP_DEAMINASES_1"/>
    <property type="match status" value="1"/>
</dbReference>
<dbReference type="PROSITE" id="PS51747">
    <property type="entry name" value="CYT_DCMP_DEAMINASES_2"/>
    <property type="match status" value="2"/>
</dbReference>
<reference key="1">
    <citation type="submission" date="2008-05" db="EMBL/GenBank/DDBJ databases">
        <title>Complete sequence of Shigella boydii serotype 18 strain BS512.</title>
        <authorList>
            <person name="Rasko D.A."/>
            <person name="Rosovitz M."/>
            <person name="Maurelli A.T."/>
            <person name="Myers G."/>
            <person name="Seshadri R."/>
            <person name="Cer R."/>
            <person name="Jiang L."/>
            <person name="Ravel J."/>
            <person name="Sebastian Y."/>
        </authorList>
    </citation>
    <scope>NUCLEOTIDE SEQUENCE [LARGE SCALE GENOMIC DNA]</scope>
    <source>
        <strain>CDC 3083-94 / BS512</strain>
    </source>
</reference>
<gene>
    <name evidence="1" type="primary">cdd</name>
    <name type="ordered locus">SbBS512_E0828</name>
</gene>
<name>CDD_SHIB3</name>
<comment type="function">
    <text evidence="1">This enzyme scavenges exogenous and endogenous cytidine and 2'-deoxycytidine for UMP synthesis.</text>
</comment>
<comment type="catalytic activity">
    <reaction evidence="1">
        <text>cytidine + H2O + H(+) = uridine + NH4(+)</text>
        <dbReference type="Rhea" id="RHEA:16069"/>
        <dbReference type="ChEBI" id="CHEBI:15377"/>
        <dbReference type="ChEBI" id="CHEBI:15378"/>
        <dbReference type="ChEBI" id="CHEBI:16704"/>
        <dbReference type="ChEBI" id="CHEBI:17562"/>
        <dbReference type="ChEBI" id="CHEBI:28938"/>
        <dbReference type="EC" id="3.5.4.5"/>
    </reaction>
</comment>
<comment type="catalytic activity">
    <reaction evidence="1">
        <text>2'-deoxycytidine + H2O + H(+) = 2'-deoxyuridine + NH4(+)</text>
        <dbReference type="Rhea" id="RHEA:13433"/>
        <dbReference type="ChEBI" id="CHEBI:15377"/>
        <dbReference type="ChEBI" id="CHEBI:15378"/>
        <dbReference type="ChEBI" id="CHEBI:15698"/>
        <dbReference type="ChEBI" id="CHEBI:16450"/>
        <dbReference type="ChEBI" id="CHEBI:28938"/>
        <dbReference type="EC" id="3.5.4.5"/>
    </reaction>
</comment>
<comment type="cofactor">
    <cofactor evidence="1">
        <name>Zn(2+)</name>
        <dbReference type="ChEBI" id="CHEBI:29105"/>
    </cofactor>
    <text evidence="1">Binds 1 zinc ion.</text>
</comment>
<comment type="subunit">
    <text evidence="1">Homodimer.</text>
</comment>
<comment type="similarity">
    <text evidence="1">Belongs to the cytidine and deoxycytidylate deaminase family.</text>
</comment>
<feature type="chain" id="PRO_1000147117" description="Cytidine deaminase">
    <location>
        <begin position="1"/>
        <end position="294"/>
    </location>
</feature>
<feature type="domain" description="CMP/dCMP-type deaminase 1" evidence="2">
    <location>
        <begin position="48"/>
        <end position="168"/>
    </location>
</feature>
<feature type="domain" description="CMP/dCMP-type deaminase 2" evidence="2">
    <location>
        <begin position="186"/>
        <end position="294"/>
    </location>
</feature>
<feature type="active site" description="Proton donor" evidence="1">
    <location>
        <position position="104"/>
    </location>
</feature>
<feature type="binding site" evidence="1">
    <location>
        <begin position="89"/>
        <end position="91"/>
    </location>
    <ligand>
        <name>substrate</name>
    </ligand>
</feature>
<feature type="binding site" evidence="1">
    <location>
        <position position="102"/>
    </location>
    <ligand>
        <name>Zn(2+)</name>
        <dbReference type="ChEBI" id="CHEBI:29105"/>
        <note>catalytic</note>
    </ligand>
</feature>
<feature type="binding site" evidence="1">
    <location>
        <position position="129"/>
    </location>
    <ligand>
        <name>Zn(2+)</name>
        <dbReference type="ChEBI" id="CHEBI:29105"/>
        <note>catalytic</note>
    </ligand>
</feature>
<feature type="binding site" evidence="1">
    <location>
        <position position="132"/>
    </location>
    <ligand>
        <name>Zn(2+)</name>
        <dbReference type="ChEBI" id="CHEBI:29105"/>
        <note>catalytic</note>
    </ligand>
</feature>
<organism>
    <name type="scientific">Shigella boydii serotype 18 (strain CDC 3083-94 / BS512)</name>
    <dbReference type="NCBI Taxonomy" id="344609"/>
    <lineage>
        <taxon>Bacteria</taxon>
        <taxon>Pseudomonadati</taxon>
        <taxon>Pseudomonadota</taxon>
        <taxon>Gammaproteobacteria</taxon>
        <taxon>Enterobacterales</taxon>
        <taxon>Enterobacteriaceae</taxon>
        <taxon>Shigella</taxon>
    </lineage>
</organism>
<accession>B2TVV2</accession>
<sequence length="294" mass="31540">MHPRFQTAFAQLADNLQSALEPILADKYFPALLTGEQVSSLKSATGLDEDALAFALLPLAAACARTPLSNFNVGAIARGVSGTWYFGANMEFIGATMQQTVHAEQSAISHAWLSGEKALAAITVNYTPCGHCRQFMNELNSGLDLRIHLPGREAHALRDYLPDAFGPKDLEIKTLLMDEQDHGYALTGDALSQAAIAAANRSHMPYSKSPSGVALECKDGRIFSGSYAENAAFNPTLPPLQGALILLNLKGYDYPDIQRAVLAEKADAPLIQWDATSATLKALGCHSIDRVLLA</sequence>
<keyword id="KW-0378">Hydrolase</keyword>
<keyword id="KW-0479">Metal-binding</keyword>
<keyword id="KW-1185">Reference proteome</keyword>
<keyword id="KW-0862">Zinc</keyword>